<protein>
    <recommendedName>
        <fullName evidence="1">Large ribosomal subunit protein bL19</fullName>
    </recommendedName>
    <alternativeName>
        <fullName evidence="2">50S ribosomal protein L19</fullName>
    </alternativeName>
</protein>
<sequence length="114" mass="13106">MLEVIKAIEAEQVRSDLPEFNVGDTVKVHQKIKEGTRERVQVFEGTVLKRQNGGARETFTVRRVAYNVAVEKTFPVNSPLIEKIQVVRKGKVRRAKLYYLRDRVGKAAKVKERI</sequence>
<proteinExistence type="inferred from homology"/>
<reference key="1">
    <citation type="journal article" date="2007" name="Genome Res.">
        <title>Genome sequence of a proteolytic (Group I) Clostridium botulinum strain Hall A and comparative analysis of the clostridial genomes.</title>
        <authorList>
            <person name="Sebaihia M."/>
            <person name="Peck M.W."/>
            <person name="Minton N.P."/>
            <person name="Thomson N.R."/>
            <person name="Holden M.T.G."/>
            <person name="Mitchell W.J."/>
            <person name="Carter A.T."/>
            <person name="Bentley S.D."/>
            <person name="Mason D.R."/>
            <person name="Crossman L."/>
            <person name="Paul C.J."/>
            <person name="Ivens A."/>
            <person name="Wells-Bennik M.H.J."/>
            <person name="Davis I.J."/>
            <person name="Cerdeno-Tarraga A.M."/>
            <person name="Churcher C."/>
            <person name="Quail M.A."/>
            <person name="Chillingworth T."/>
            <person name="Feltwell T."/>
            <person name="Fraser A."/>
            <person name="Goodhead I."/>
            <person name="Hance Z."/>
            <person name="Jagels K."/>
            <person name="Larke N."/>
            <person name="Maddison M."/>
            <person name="Moule S."/>
            <person name="Mungall K."/>
            <person name="Norbertczak H."/>
            <person name="Rabbinowitsch E."/>
            <person name="Sanders M."/>
            <person name="Simmonds M."/>
            <person name="White B."/>
            <person name="Whithead S."/>
            <person name="Parkhill J."/>
        </authorList>
    </citation>
    <scope>NUCLEOTIDE SEQUENCE [LARGE SCALE GENOMIC DNA]</scope>
    <source>
        <strain>Hall / ATCC 3502 / NCTC 13319 / Type A</strain>
    </source>
</reference>
<reference key="2">
    <citation type="journal article" date="2007" name="PLoS ONE">
        <title>Analysis of the neurotoxin complex genes in Clostridium botulinum A1-A4 and B1 strains: BoNT/A3, /Ba4 and /B1 clusters are located within plasmids.</title>
        <authorList>
            <person name="Smith T.J."/>
            <person name="Hill K.K."/>
            <person name="Foley B.T."/>
            <person name="Detter J.C."/>
            <person name="Munk A.C."/>
            <person name="Bruce D.C."/>
            <person name="Doggett N.A."/>
            <person name="Smith L.A."/>
            <person name="Marks J.D."/>
            <person name="Xie G."/>
            <person name="Brettin T.S."/>
        </authorList>
    </citation>
    <scope>NUCLEOTIDE SEQUENCE [LARGE SCALE GENOMIC DNA]</scope>
    <source>
        <strain>Hall / ATCC 3502 / NCTC 13319 / Type A</strain>
    </source>
</reference>
<accession>A5I4M2</accession>
<accession>A7G5S1</accession>
<comment type="function">
    <text evidence="1">This protein is located at the 30S-50S ribosomal subunit interface and may play a role in the structure and function of the aminoacyl-tRNA binding site.</text>
</comment>
<comment type="similarity">
    <text evidence="1">Belongs to the bacterial ribosomal protein bL19 family.</text>
</comment>
<keyword id="KW-1185">Reference proteome</keyword>
<keyword id="KW-0687">Ribonucleoprotein</keyword>
<keyword id="KW-0689">Ribosomal protein</keyword>
<dbReference type="EMBL" id="CP000727">
    <property type="protein sequence ID" value="ABS36445.1"/>
    <property type="molecule type" value="Genomic_DNA"/>
</dbReference>
<dbReference type="EMBL" id="AM412317">
    <property type="protein sequence ID" value="CAL83994.1"/>
    <property type="molecule type" value="Genomic_DNA"/>
</dbReference>
<dbReference type="RefSeq" id="WP_003362586.1">
    <property type="nucleotide sequence ID" value="NC_009698.1"/>
</dbReference>
<dbReference type="RefSeq" id="YP_001254943.1">
    <property type="nucleotide sequence ID" value="NC_009495.1"/>
</dbReference>
<dbReference type="RefSeq" id="YP_001388136.1">
    <property type="nucleotide sequence ID" value="NC_009698.1"/>
</dbReference>
<dbReference type="SMR" id="A5I4M2"/>
<dbReference type="GeneID" id="5186699"/>
<dbReference type="KEGG" id="cbh:CLC_2292"/>
<dbReference type="KEGG" id="cbo:CBO2444"/>
<dbReference type="PATRIC" id="fig|413999.7.peg.2421"/>
<dbReference type="HOGENOM" id="CLU_103507_2_2_9"/>
<dbReference type="PRO" id="PR:A5I4M2"/>
<dbReference type="Proteomes" id="UP000001986">
    <property type="component" value="Chromosome"/>
</dbReference>
<dbReference type="GO" id="GO:0022625">
    <property type="term" value="C:cytosolic large ribosomal subunit"/>
    <property type="evidence" value="ECO:0000318"/>
    <property type="project" value="GO_Central"/>
</dbReference>
<dbReference type="GO" id="GO:0003735">
    <property type="term" value="F:structural constituent of ribosome"/>
    <property type="evidence" value="ECO:0000318"/>
    <property type="project" value="GO_Central"/>
</dbReference>
<dbReference type="GO" id="GO:0006412">
    <property type="term" value="P:translation"/>
    <property type="evidence" value="ECO:0007669"/>
    <property type="project" value="UniProtKB-UniRule"/>
</dbReference>
<dbReference type="FunFam" id="2.30.30.790:FF:000009">
    <property type="entry name" value="50S ribosomal protein L19"/>
    <property type="match status" value="1"/>
</dbReference>
<dbReference type="Gene3D" id="2.30.30.790">
    <property type="match status" value="1"/>
</dbReference>
<dbReference type="HAMAP" id="MF_00402">
    <property type="entry name" value="Ribosomal_bL19"/>
    <property type="match status" value="1"/>
</dbReference>
<dbReference type="InterPro" id="IPR001857">
    <property type="entry name" value="Ribosomal_bL19"/>
</dbReference>
<dbReference type="InterPro" id="IPR018257">
    <property type="entry name" value="Ribosomal_bL19_CS"/>
</dbReference>
<dbReference type="InterPro" id="IPR038657">
    <property type="entry name" value="Ribosomal_bL19_sf"/>
</dbReference>
<dbReference type="InterPro" id="IPR008991">
    <property type="entry name" value="Translation_prot_SH3-like_sf"/>
</dbReference>
<dbReference type="NCBIfam" id="TIGR01024">
    <property type="entry name" value="rplS_bact"/>
    <property type="match status" value="1"/>
</dbReference>
<dbReference type="PANTHER" id="PTHR15680:SF9">
    <property type="entry name" value="LARGE RIBOSOMAL SUBUNIT PROTEIN BL19M"/>
    <property type="match status" value="1"/>
</dbReference>
<dbReference type="PANTHER" id="PTHR15680">
    <property type="entry name" value="RIBOSOMAL PROTEIN L19"/>
    <property type="match status" value="1"/>
</dbReference>
<dbReference type="Pfam" id="PF01245">
    <property type="entry name" value="Ribosomal_L19"/>
    <property type="match status" value="1"/>
</dbReference>
<dbReference type="PIRSF" id="PIRSF002191">
    <property type="entry name" value="Ribosomal_L19"/>
    <property type="match status" value="1"/>
</dbReference>
<dbReference type="PRINTS" id="PR00061">
    <property type="entry name" value="RIBOSOMALL19"/>
</dbReference>
<dbReference type="SUPFAM" id="SSF50104">
    <property type="entry name" value="Translation proteins SH3-like domain"/>
    <property type="match status" value="1"/>
</dbReference>
<dbReference type="PROSITE" id="PS01015">
    <property type="entry name" value="RIBOSOMAL_L19"/>
    <property type="match status" value="1"/>
</dbReference>
<name>RL19_CLOBH</name>
<evidence type="ECO:0000255" key="1">
    <source>
        <dbReference type="HAMAP-Rule" id="MF_00402"/>
    </source>
</evidence>
<evidence type="ECO:0000305" key="2"/>
<gene>
    <name evidence="1" type="primary">rplS</name>
    <name type="ordered locus">CBO2444</name>
    <name type="ordered locus">CLC_2292</name>
</gene>
<organism>
    <name type="scientific">Clostridium botulinum (strain Hall / ATCC 3502 / NCTC 13319 / Type A)</name>
    <dbReference type="NCBI Taxonomy" id="441771"/>
    <lineage>
        <taxon>Bacteria</taxon>
        <taxon>Bacillati</taxon>
        <taxon>Bacillota</taxon>
        <taxon>Clostridia</taxon>
        <taxon>Eubacteriales</taxon>
        <taxon>Clostridiaceae</taxon>
        <taxon>Clostridium</taxon>
    </lineage>
</organism>
<feature type="chain" id="PRO_1000049661" description="Large ribosomal subunit protein bL19">
    <location>
        <begin position="1"/>
        <end position="114"/>
    </location>
</feature>